<gene>
    <name evidence="1" type="primary">rpsS</name>
    <name type="ordered locus">LMOf2365_2601</name>
</gene>
<accession>Q71WF0</accession>
<dbReference type="EMBL" id="AE017262">
    <property type="protein sequence ID" value="AAT05366.1"/>
    <property type="molecule type" value="Genomic_DNA"/>
</dbReference>
<dbReference type="RefSeq" id="WP_003720946.1">
    <property type="nucleotide sequence ID" value="NC_002973.6"/>
</dbReference>
<dbReference type="SMR" id="Q71WF0"/>
<dbReference type="GeneID" id="93236050"/>
<dbReference type="KEGG" id="lmf:LMOf2365_2601"/>
<dbReference type="HOGENOM" id="CLU_144911_0_1_9"/>
<dbReference type="GO" id="GO:0005737">
    <property type="term" value="C:cytoplasm"/>
    <property type="evidence" value="ECO:0007669"/>
    <property type="project" value="UniProtKB-ARBA"/>
</dbReference>
<dbReference type="GO" id="GO:0015935">
    <property type="term" value="C:small ribosomal subunit"/>
    <property type="evidence" value="ECO:0007669"/>
    <property type="project" value="InterPro"/>
</dbReference>
<dbReference type="GO" id="GO:0019843">
    <property type="term" value="F:rRNA binding"/>
    <property type="evidence" value="ECO:0007669"/>
    <property type="project" value="UniProtKB-UniRule"/>
</dbReference>
<dbReference type="GO" id="GO:0003735">
    <property type="term" value="F:structural constituent of ribosome"/>
    <property type="evidence" value="ECO:0007669"/>
    <property type="project" value="InterPro"/>
</dbReference>
<dbReference type="GO" id="GO:0000028">
    <property type="term" value="P:ribosomal small subunit assembly"/>
    <property type="evidence" value="ECO:0007669"/>
    <property type="project" value="TreeGrafter"/>
</dbReference>
<dbReference type="GO" id="GO:0006412">
    <property type="term" value="P:translation"/>
    <property type="evidence" value="ECO:0007669"/>
    <property type="project" value="UniProtKB-UniRule"/>
</dbReference>
<dbReference type="FunFam" id="3.30.860.10:FF:000001">
    <property type="entry name" value="30S ribosomal protein S19"/>
    <property type="match status" value="1"/>
</dbReference>
<dbReference type="Gene3D" id="3.30.860.10">
    <property type="entry name" value="30s Ribosomal Protein S19, Chain A"/>
    <property type="match status" value="1"/>
</dbReference>
<dbReference type="HAMAP" id="MF_00531">
    <property type="entry name" value="Ribosomal_uS19"/>
    <property type="match status" value="1"/>
</dbReference>
<dbReference type="InterPro" id="IPR002222">
    <property type="entry name" value="Ribosomal_uS19"/>
</dbReference>
<dbReference type="InterPro" id="IPR005732">
    <property type="entry name" value="Ribosomal_uS19_bac-type"/>
</dbReference>
<dbReference type="InterPro" id="IPR020934">
    <property type="entry name" value="Ribosomal_uS19_CS"/>
</dbReference>
<dbReference type="InterPro" id="IPR023575">
    <property type="entry name" value="Ribosomal_uS19_SF"/>
</dbReference>
<dbReference type="NCBIfam" id="TIGR01050">
    <property type="entry name" value="rpsS_bact"/>
    <property type="match status" value="1"/>
</dbReference>
<dbReference type="PANTHER" id="PTHR11880">
    <property type="entry name" value="RIBOSOMAL PROTEIN S19P FAMILY MEMBER"/>
    <property type="match status" value="1"/>
</dbReference>
<dbReference type="PANTHER" id="PTHR11880:SF8">
    <property type="entry name" value="SMALL RIBOSOMAL SUBUNIT PROTEIN US19M"/>
    <property type="match status" value="1"/>
</dbReference>
<dbReference type="Pfam" id="PF00203">
    <property type="entry name" value="Ribosomal_S19"/>
    <property type="match status" value="1"/>
</dbReference>
<dbReference type="PIRSF" id="PIRSF002144">
    <property type="entry name" value="Ribosomal_S19"/>
    <property type="match status" value="1"/>
</dbReference>
<dbReference type="PRINTS" id="PR00975">
    <property type="entry name" value="RIBOSOMALS19"/>
</dbReference>
<dbReference type="SUPFAM" id="SSF54570">
    <property type="entry name" value="Ribosomal protein S19"/>
    <property type="match status" value="1"/>
</dbReference>
<dbReference type="PROSITE" id="PS00323">
    <property type="entry name" value="RIBOSOMAL_S19"/>
    <property type="match status" value="1"/>
</dbReference>
<protein>
    <recommendedName>
        <fullName evidence="1">Small ribosomal subunit protein uS19</fullName>
    </recommendedName>
    <alternativeName>
        <fullName evidence="2">30S ribosomal protein S19</fullName>
    </alternativeName>
</protein>
<evidence type="ECO:0000255" key="1">
    <source>
        <dbReference type="HAMAP-Rule" id="MF_00531"/>
    </source>
</evidence>
<evidence type="ECO:0000305" key="2"/>
<reference key="1">
    <citation type="journal article" date="2004" name="Nucleic Acids Res.">
        <title>Whole genome comparisons of serotype 4b and 1/2a strains of the food-borne pathogen Listeria monocytogenes reveal new insights into the core genome components of this species.</title>
        <authorList>
            <person name="Nelson K.E."/>
            <person name="Fouts D.E."/>
            <person name="Mongodin E.F."/>
            <person name="Ravel J."/>
            <person name="DeBoy R.T."/>
            <person name="Kolonay J.F."/>
            <person name="Rasko D.A."/>
            <person name="Angiuoli S.V."/>
            <person name="Gill S.R."/>
            <person name="Paulsen I.T."/>
            <person name="Peterson J.D."/>
            <person name="White O."/>
            <person name="Nelson W.C."/>
            <person name="Nierman W.C."/>
            <person name="Beanan M.J."/>
            <person name="Brinkac L.M."/>
            <person name="Daugherty S.C."/>
            <person name="Dodson R.J."/>
            <person name="Durkin A.S."/>
            <person name="Madupu R."/>
            <person name="Haft D.H."/>
            <person name="Selengut J."/>
            <person name="Van Aken S.E."/>
            <person name="Khouri H.M."/>
            <person name="Fedorova N."/>
            <person name="Forberger H.A."/>
            <person name="Tran B."/>
            <person name="Kathariou S."/>
            <person name="Wonderling L.D."/>
            <person name="Uhlich G.A."/>
            <person name="Bayles D.O."/>
            <person name="Luchansky J.B."/>
            <person name="Fraser C.M."/>
        </authorList>
    </citation>
    <scope>NUCLEOTIDE SEQUENCE [LARGE SCALE GENOMIC DNA]</scope>
    <source>
        <strain>F2365</strain>
    </source>
</reference>
<organism>
    <name type="scientific">Listeria monocytogenes serotype 4b (strain F2365)</name>
    <dbReference type="NCBI Taxonomy" id="265669"/>
    <lineage>
        <taxon>Bacteria</taxon>
        <taxon>Bacillati</taxon>
        <taxon>Bacillota</taxon>
        <taxon>Bacilli</taxon>
        <taxon>Bacillales</taxon>
        <taxon>Listeriaceae</taxon>
        <taxon>Listeria</taxon>
    </lineage>
</organism>
<comment type="function">
    <text evidence="1">Protein S19 forms a complex with S13 that binds strongly to the 16S ribosomal RNA.</text>
</comment>
<comment type="similarity">
    <text evidence="1">Belongs to the universal ribosomal protein uS19 family.</text>
</comment>
<sequence length="92" mass="10475">MGRSLKKGPFVDDHLMKKVEAAAESEKKQVIKTWSRRSTIFPTFVGQTIAVYDGRKHVPVYVQEDMVGHKLGEFAPTRTYRGHAGDDKKTKR</sequence>
<keyword id="KW-0687">Ribonucleoprotein</keyword>
<keyword id="KW-0689">Ribosomal protein</keyword>
<keyword id="KW-0694">RNA-binding</keyword>
<keyword id="KW-0699">rRNA-binding</keyword>
<feature type="chain" id="PRO_0000129844" description="Small ribosomal subunit protein uS19">
    <location>
        <begin position="1"/>
        <end position="92"/>
    </location>
</feature>
<name>RS19_LISMF</name>
<proteinExistence type="inferred from homology"/>